<accession>Q9GCB9</accession>
<accession>Q8LGB5</accession>
<accession>Q9SS62</accession>
<comment type="subunit">
    <text evidence="2">Component of the mitochondrial ribosome small subunit.</text>
</comment>
<comment type="subcellular location">
    <subcellularLocation>
        <location evidence="1">Mitochondrion</location>
    </subcellularLocation>
</comment>
<comment type="similarity">
    <text evidence="2">Belongs to the universal ribosomal protein uS2 family.</text>
</comment>
<organism>
    <name type="scientific">Arabidopsis thaliana</name>
    <name type="common">Mouse-ear cress</name>
    <dbReference type="NCBI Taxonomy" id="3702"/>
    <lineage>
        <taxon>Eukaryota</taxon>
        <taxon>Viridiplantae</taxon>
        <taxon>Streptophyta</taxon>
        <taxon>Embryophyta</taxon>
        <taxon>Tracheophyta</taxon>
        <taxon>Spermatophyta</taxon>
        <taxon>Magnoliopsida</taxon>
        <taxon>eudicotyledons</taxon>
        <taxon>Gunneridae</taxon>
        <taxon>Pentapetalae</taxon>
        <taxon>rosids</taxon>
        <taxon>malvids</taxon>
        <taxon>Brassicales</taxon>
        <taxon>Brassicaceae</taxon>
        <taxon>Camelineae</taxon>
        <taxon>Arabidopsis</taxon>
    </lineage>
</organism>
<sequence>MTIHAAVIQKLLNTGAHLGRRAAEHHFKQYAYGTRNGMTIIDSDKTLICLRSAAHFVANLAHMRGNIFFVNTNPLFDEIIELTSRRIQGDSYNHNRAMNLWKMGGFLTNSYSPKKFRSRHKKLCFGPTTMPDCVVVFDSERKSSVILEASKLQIPVVAIVDPNVPLEFFEKITYPVPARDSVKFVYLFCNVITKCFVAEQMKLGIKEGSNEDLMKDLAA</sequence>
<feature type="chain" id="PRO_0000134338" description="Small ribosomal subunit protein uS2m">
    <location>
        <begin position="1"/>
        <end position="219"/>
    </location>
</feature>
<feature type="sequence conflict" description="In Ref. 5; AAM60943." evidence="2" ref="5">
    <original>M</original>
    <variation>I</variation>
    <location>
        <position position="98"/>
    </location>
</feature>
<proteinExistence type="evidence at protein level"/>
<reference key="1">
    <citation type="journal article" date="2002" name="Plant Mol. Biol.">
        <title>Plant mitochondrial rps2 genes code for proteins with a C-terminal extension that is processed.</title>
        <authorList>
            <person name="Perrotta G."/>
            <person name="Grienenberger J.-M."/>
            <person name="Gualberto J.M."/>
        </authorList>
    </citation>
    <scope>NUCLEOTIDE SEQUENCE [MRNA]</scope>
</reference>
<reference key="2">
    <citation type="journal article" date="2000" name="Nature">
        <title>Sequence and analysis of chromosome 3 of the plant Arabidopsis thaliana.</title>
        <authorList>
            <person name="Salanoubat M."/>
            <person name="Lemcke K."/>
            <person name="Rieger M."/>
            <person name="Ansorge W."/>
            <person name="Unseld M."/>
            <person name="Fartmann B."/>
            <person name="Valle G."/>
            <person name="Bloecker H."/>
            <person name="Perez-Alonso M."/>
            <person name="Obermaier B."/>
            <person name="Delseny M."/>
            <person name="Boutry M."/>
            <person name="Grivell L.A."/>
            <person name="Mache R."/>
            <person name="Puigdomenech P."/>
            <person name="De Simone V."/>
            <person name="Choisne N."/>
            <person name="Artiguenave F."/>
            <person name="Robert C."/>
            <person name="Brottier P."/>
            <person name="Wincker P."/>
            <person name="Cattolico L."/>
            <person name="Weissenbach J."/>
            <person name="Saurin W."/>
            <person name="Quetier F."/>
            <person name="Schaefer M."/>
            <person name="Mueller-Auer S."/>
            <person name="Gabel C."/>
            <person name="Fuchs M."/>
            <person name="Benes V."/>
            <person name="Wurmbach E."/>
            <person name="Drzonek H."/>
            <person name="Erfle H."/>
            <person name="Jordan N."/>
            <person name="Bangert S."/>
            <person name="Wiedelmann R."/>
            <person name="Kranz H."/>
            <person name="Voss H."/>
            <person name="Holland R."/>
            <person name="Brandt P."/>
            <person name="Nyakatura G."/>
            <person name="Vezzi A."/>
            <person name="D'Angelo M."/>
            <person name="Pallavicini A."/>
            <person name="Toppo S."/>
            <person name="Simionati B."/>
            <person name="Conrad A."/>
            <person name="Hornischer K."/>
            <person name="Kauer G."/>
            <person name="Loehnert T.-H."/>
            <person name="Nordsiek G."/>
            <person name="Reichelt J."/>
            <person name="Scharfe M."/>
            <person name="Schoen O."/>
            <person name="Bargues M."/>
            <person name="Terol J."/>
            <person name="Climent J."/>
            <person name="Navarro P."/>
            <person name="Collado C."/>
            <person name="Perez-Perez A."/>
            <person name="Ottenwaelder B."/>
            <person name="Duchemin D."/>
            <person name="Cooke R."/>
            <person name="Laudie M."/>
            <person name="Berger-Llauro C."/>
            <person name="Purnelle B."/>
            <person name="Masuy D."/>
            <person name="de Haan M."/>
            <person name="Maarse A.C."/>
            <person name="Alcaraz J.-P."/>
            <person name="Cottet A."/>
            <person name="Casacuberta E."/>
            <person name="Monfort A."/>
            <person name="Argiriou A."/>
            <person name="Flores M."/>
            <person name="Liguori R."/>
            <person name="Vitale D."/>
            <person name="Mannhaupt G."/>
            <person name="Haase D."/>
            <person name="Schoof H."/>
            <person name="Rudd S."/>
            <person name="Zaccaria P."/>
            <person name="Mewes H.-W."/>
            <person name="Mayer K.F.X."/>
            <person name="Kaul S."/>
            <person name="Town C.D."/>
            <person name="Koo H.L."/>
            <person name="Tallon L.J."/>
            <person name="Jenkins J."/>
            <person name="Rooney T."/>
            <person name="Rizzo M."/>
            <person name="Walts A."/>
            <person name="Utterback T."/>
            <person name="Fujii C.Y."/>
            <person name="Shea T.P."/>
            <person name="Creasy T.H."/>
            <person name="Haas B."/>
            <person name="Maiti R."/>
            <person name="Wu D."/>
            <person name="Peterson J."/>
            <person name="Van Aken S."/>
            <person name="Pai G."/>
            <person name="Militscher J."/>
            <person name="Sellers P."/>
            <person name="Gill J.E."/>
            <person name="Feldblyum T.V."/>
            <person name="Preuss D."/>
            <person name="Lin X."/>
            <person name="Nierman W.C."/>
            <person name="Salzberg S.L."/>
            <person name="White O."/>
            <person name="Venter J.C."/>
            <person name="Fraser C.M."/>
            <person name="Kaneko T."/>
            <person name="Nakamura Y."/>
            <person name="Sato S."/>
            <person name="Kato T."/>
            <person name="Asamizu E."/>
            <person name="Sasamoto S."/>
            <person name="Kimura T."/>
            <person name="Idesawa K."/>
            <person name="Kawashima K."/>
            <person name="Kishida Y."/>
            <person name="Kiyokawa C."/>
            <person name="Kohara M."/>
            <person name="Matsumoto M."/>
            <person name="Matsuno A."/>
            <person name="Muraki A."/>
            <person name="Nakayama S."/>
            <person name="Nakazaki N."/>
            <person name="Shinpo S."/>
            <person name="Takeuchi C."/>
            <person name="Wada T."/>
            <person name="Watanabe A."/>
            <person name="Yamada M."/>
            <person name="Yasuda M."/>
            <person name="Tabata S."/>
        </authorList>
    </citation>
    <scope>NUCLEOTIDE SEQUENCE [LARGE SCALE GENOMIC DNA]</scope>
    <source>
        <strain>cv. Columbia</strain>
    </source>
</reference>
<reference key="3">
    <citation type="journal article" date="2017" name="Plant J.">
        <title>Araport11: a complete reannotation of the Arabidopsis thaliana reference genome.</title>
        <authorList>
            <person name="Cheng C.Y."/>
            <person name="Krishnakumar V."/>
            <person name="Chan A.P."/>
            <person name="Thibaud-Nissen F."/>
            <person name="Schobel S."/>
            <person name="Town C.D."/>
        </authorList>
    </citation>
    <scope>GENOME REANNOTATION</scope>
    <source>
        <strain>cv. Columbia</strain>
    </source>
</reference>
<reference key="4">
    <citation type="journal article" date="2003" name="Science">
        <title>Empirical analysis of transcriptional activity in the Arabidopsis genome.</title>
        <authorList>
            <person name="Yamada K."/>
            <person name="Lim J."/>
            <person name="Dale J.M."/>
            <person name="Chen H."/>
            <person name="Shinn P."/>
            <person name="Palm C.J."/>
            <person name="Southwick A.M."/>
            <person name="Wu H.C."/>
            <person name="Kim C.J."/>
            <person name="Nguyen M."/>
            <person name="Pham P.K."/>
            <person name="Cheuk R.F."/>
            <person name="Karlin-Newmann G."/>
            <person name="Liu S.X."/>
            <person name="Lam B."/>
            <person name="Sakano H."/>
            <person name="Wu T."/>
            <person name="Yu G."/>
            <person name="Miranda M."/>
            <person name="Quach H.L."/>
            <person name="Tripp M."/>
            <person name="Chang C.H."/>
            <person name="Lee J.M."/>
            <person name="Toriumi M.J."/>
            <person name="Chan M.M."/>
            <person name="Tang C.C."/>
            <person name="Onodera C.S."/>
            <person name="Deng J.M."/>
            <person name="Akiyama K."/>
            <person name="Ansari Y."/>
            <person name="Arakawa T."/>
            <person name="Banh J."/>
            <person name="Banno F."/>
            <person name="Bowser L."/>
            <person name="Brooks S.Y."/>
            <person name="Carninci P."/>
            <person name="Chao Q."/>
            <person name="Choy N."/>
            <person name="Enju A."/>
            <person name="Goldsmith A.D."/>
            <person name="Gurjal M."/>
            <person name="Hansen N.F."/>
            <person name="Hayashizaki Y."/>
            <person name="Johnson-Hopson C."/>
            <person name="Hsuan V.W."/>
            <person name="Iida K."/>
            <person name="Karnes M."/>
            <person name="Khan S."/>
            <person name="Koesema E."/>
            <person name="Ishida J."/>
            <person name="Jiang P.X."/>
            <person name="Jones T."/>
            <person name="Kawai J."/>
            <person name="Kamiya A."/>
            <person name="Meyers C."/>
            <person name="Nakajima M."/>
            <person name="Narusaka M."/>
            <person name="Seki M."/>
            <person name="Sakurai T."/>
            <person name="Satou M."/>
            <person name="Tamse R."/>
            <person name="Vaysberg M."/>
            <person name="Wallender E.K."/>
            <person name="Wong C."/>
            <person name="Yamamura Y."/>
            <person name="Yuan S."/>
            <person name="Shinozaki K."/>
            <person name="Davis R.W."/>
            <person name="Theologis A."/>
            <person name="Ecker J.R."/>
        </authorList>
    </citation>
    <scope>NUCLEOTIDE SEQUENCE [LARGE SCALE MRNA]</scope>
    <source>
        <strain>cv. Columbia</strain>
    </source>
</reference>
<reference key="5">
    <citation type="submission" date="2002-03" db="EMBL/GenBank/DDBJ databases">
        <title>Full-length cDNA from Arabidopsis thaliana.</title>
        <authorList>
            <person name="Brover V.V."/>
            <person name="Troukhan M.E."/>
            <person name="Alexandrov N.A."/>
            <person name="Lu Y.-P."/>
            <person name="Flavell R.B."/>
            <person name="Feldmann K.A."/>
        </authorList>
    </citation>
    <scope>NUCLEOTIDE SEQUENCE [LARGE SCALE MRNA]</scope>
</reference>
<reference key="6">
    <citation type="journal article" date="2023" name="Plant Cell">
        <title>An updated nomenclature for plant ribosomal protein genes.</title>
        <authorList>
            <person name="Scarpin M.R."/>
            <person name="Busche M."/>
            <person name="Martinez R.E."/>
            <person name="Harper L.C."/>
            <person name="Reiser L."/>
            <person name="Szakonyi D."/>
            <person name="Merchante C."/>
            <person name="Lan T."/>
            <person name="Xiong W."/>
            <person name="Mo B."/>
            <person name="Tang G."/>
            <person name="Chen X."/>
            <person name="Bailey-Serres J."/>
            <person name="Browning K.S."/>
            <person name="Brunkard J.O."/>
        </authorList>
    </citation>
    <scope>NOMENCLATURE</scope>
</reference>
<dbReference type="EMBL" id="AF273102">
    <property type="protein sequence ID" value="AAG03026.1"/>
    <property type="molecule type" value="mRNA"/>
</dbReference>
<dbReference type="EMBL" id="AC009327">
    <property type="protein sequence ID" value="AAF03472.1"/>
    <property type="molecule type" value="Genomic_DNA"/>
</dbReference>
<dbReference type="EMBL" id="CP002686">
    <property type="protein sequence ID" value="AEE73961.1"/>
    <property type="molecule type" value="Genomic_DNA"/>
</dbReference>
<dbReference type="EMBL" id="BT003049">
    <property type="protein sequence ID" value="AAO23614.1"/>
    <property type="molecule type" value="mRNA"/>
</dbReference>
<dbReference type="EMBL" id="AY084362">
    <property type="protein sequence ID" value="AAM60943.1"/>
    <property type="molecule type" value="mRNA"/>
</dbReference>
<dbReference type="RefSeq" id="NP_187010.1">
    <property type="nucleotide sequence ID" value="NM_111231.4"/>
</dbReference>
<dbReference type="PDB" id="6XYW">
    <property type="method" value="EM"/>
    <property type="resolution" value="3.86 A"/>
    <property type="chains" value="Ba=1-219"/>
</dbReference>
<dbReference type="PDBsum" id="6XYW"/>
<dbReference type="EMDB" id="EMD-10654"/>
<dbReference type="SMR" id="Q9GCB9"/>
<dbReference type="BioGRID" id="6544">
    <property type="interactions" value="2"/>
</dbReference>
<dbReference type="FunCoup" id="Q9GCB9">
    <property type="interactions" value="1308"/>
</dbReference>
<dbReference type="IntAct" id="Q9GCB9">
    <property type="interactions" value="1"/>
</dbReference>
<dbReference type="STRING" id="3702.Q9GCB9"/>
<dbReference type="iPTMnet" id="Q9GCB9"/>
<dbReference type="PaxDb" id="3702-AT3G03600.1"/>
<dbReference type="ProteomicsDB" id="228062"/>
<dbReference type="EnsemblPlants" id="AT3G03600.1">
    <property type="protein sequence ID" value="AT3G03600.1"/>
    <property type="gene ID" value="AT3G03600"/>
</dbReference>
<dbReference type="GeneID" id="821211"/>
<dbReference type="Gramene" id="AT3G03600.1">
    <property type="protein sequence ID" value="AT3G03600.1"/>
    <property type="gene ID" value="AT3G03600"/>
</dbReference>
<dbReference type="KEGG" id="ath:AT3G03600"/>
<dbReference type="Araport" id="AT3G03600"/>
<dbReference type="TAIR" id="AT3G03600">
    <property type="gene designation" value="RPS2"/>
</dbReference>
<dbReference type="eggNOG" id="KOG0832">
    <property type="taxonomic scope" value="Eukaryota"/>
</dbReference>
<dbReference type="HOGENOM" id="CLU_095154_0_0_1"/>
<dbReference type="InParanoid" id="Q9GCB9"/>
<dbReference type="OMA" id="HNRAMNL"/>
<dbReference type="OrthoDB" id="932129at2759"/>
<dbReference type="PhylomeDB" id="Q9GCB9"/>
<dbReference type="PRO" id="PR:Q9GCB9"/>
<dbReference type="Proteomes" id="UP000006548">
    <property type="component" value="Chromosome 3"/>
</dbReference>
<dbReference type="ExpressionAtlas" id="Q9GCB9">
    <property type="expression patterns" value="baseline and differential"/>
</dbReference>
<dbReference type="GO" id="GO:0005763">
    <property type="term" value="C:mitochondrial small ribosomal subunit"/>
    <property type="evidence" value="ECO:0000250"/>
    <property type="project" value="TAIR"/>
</dbReference>
<dbReference type="GO" id="GO:0003735">
    <property type="term" value="F:structural constituent of ribosome"/>
    <property type="evidence" value="ECO:0000304"/>
    <property type="project" value="TAIR"/>
</dbReference>
<dbReference type="GO" id="GO:0006412">
    <property type="term" value="P:translation"/>
    <property type="evidence" value="ECO:0000304"/>
    <property type="project" value="TAIR"/>
</dbReference>
<dbReference type="CDD" id="cd01425">
    <property type="entry name" value="RPS2"/>
    <property type="match status" value="1"/>
</dbReference>
<dbReference type="FunFam" id="3.40.50.10490:FF:000056">
    <property type="entry name" value="Ribosomal protein S2"/>
    <property type="match status" value="1"/>
</dbReference>
<dbReference type="Gene3D" id="3.40.50.10490">
    <property type="entry name" value="Glucose-6-phosphate isomerase like protein, domain 1"/>
    <property type="match status" value="1"/>
</dbReference>
<dbReference type="InterPro" id="IPR001865">
    <property type="entry name" value="Ribosomal_uS2"/>
</dbReference>
<dbReference type="InterPro" id="IPR005706">
    <property type="entry name" value="Ribosomal_uS2_bac/mit/plastid"/>
</dbReference>
<dbReference type="InterPro" id="IPR018130">
    <property type="entry name" value="Ribosomal_uS2_CS"/>
</dbReference>
<dbReference type="InterPro" id="IPR023591">
    <property type="entry name" value="Ribosomal_uS2_flav_dom_sf"/>
</dbReference>
<dbReference type="PANTHER" id="PTHR12534">
    <property type="entry name" value="30S RIBOSOMAL PROTEIN S2 PROKARYOTIC AND ORGANELLAR"/>
    <property type="match status" value="1"/>
</dbReference>
<dbReference type="PANTHER" id="PTHR12534:SF1">
    <property type="entry name" value="SMALL RIBOSOMAL SUBUNIT PROTEIN US2M"/>
    <property type="match status" value="1"/>
</dbReference>
<dbReference type="Pfam" id="PF00318">
    <property type="entry name" value="Ribosomal_S2"/>
    <property type="match status" value="2"/>
</dbReference>
<dbReference type="PRINTS" id="PR00395">
    <property type="entry name" value="RIBOSOMALS2"/>
</dbReference>
<dbReference type="SUPFAM" id="SSF52313">
    <property type="entry name" value="Ribosomal protein S2"/>
    <property type="match status" value="1"/>
</dbReference>
<dbReference type="PROSITE" id="PS00962">
    <property type="entry name" value="RIBOSOMAL_S2_1"/>
    <property type="match status" value="1"/>
</dbReference>
<protein>
    <recommendedName>
        <fullName evidence="1">Small ribosomal subunit protein uS2m</fullName>
    </recommendedName>
    <alternativeName>
        <fullName>Ribosomal protein S2, mitochondrial</fullName>
    </alternativeName>
</protein>
<gene>
    <name type="primary">RPS2</name>
    <name type="ordered locus">At3g03600</name>
    <name type="ORF">T12J13.12</name>
</gene>
<keyword id="KW-0002">3D-structure</keyword>
<keyword id="KW-0496">Mitochondrion</keyword>
<keyword id="KW-1185">Reference proteome</keyword>
<keyword id="KW-0687">Ribonucleoprotein</keyword>
<keyword id="KW-0689">Ribosomal protein</keyword>
<evidence type="ECO:0000303" key="1">
    <source>
    </source>
</evidence>
<evidence type="ECO:0000305" key="2"/>
<name>RT02_ARATH</name>